<name>RL7_PSEP7</name>
<sequence length="122" mass="12479">MALTNEDIINAVSEMSVMQVVELIKAMEEKFGVTAAAATVAAAGPAAAAAEEQTEFTIVLAEAGDKKVNVIKVVRELTGLGLKEAKAVVDGAPGVVKEGASKEEAEAAKKALEEAGAKVELK</sequence>
<comment type="function">
    <text evidence="1">Forms part of the ribosomal stalk which helps the ribosome interact with GTP-bound translation factors. Is thus essential for accurate translation.</text>
</comment>
<comment type="subunit">
    <text evidence="1">Homodimer. Part of the ribosomal stalk of the 50S ribosomal subunit. Forms a multimeric L10(L12)X complex, where L10 forms an elongated spine to which 2 to 4 L12 dimers bind in a sequential fashion. Binds GTP-bound translation factors.</text>
</comment>
<comment type="similarity">
    <text evidence="1">Belongs to the bacterial ribosomal protein bL12 family.</text>
</comment>
<gene>
    <name evidence="1" type="primary">rplL</name>
    <name type="ordered locus">PSPA7_0829</name>
</gene>
<proteinExistence type="inferred from homology"/>
<protein>
    <recommendedName>
        <fullName evidence="1">Large ribosomal subunit protein bL12</fullName>
    </recommendedName>
    <alternativeName>
        <fullName evidence="2">50S ribosomal protein L7/L12</fullName>
    </alternativeName>
</protein>
<evidence type="ECO:0000255" key="1">
    <source>
        <dbReference type="HAMAP-Rule" id="MF_00368"/>
    </source>
</evidence>
<evidence type="ECO:0000305" key="2"/>
<keyword id="KW-0687">Ribonucleoprotein</keyword>
<keyword id="KW-0689">Ribosomal protein</keyword>
<reference key="1">
    <citation type="submission" date="2007-06" db="EMBL/GenBank/DDBJ databases">
        <authorList>
            <person name="Dodson R.J."/>
            <person name="Harkins D."/>
            <person name="Paulsen I.T."/>
        </authorList>
    </citation>
    <scope>NUCLEOTIDE SEQUENCE [LARGE SCALE GENOMIC DNA]</scope>
    <source>
        <strain>DSM 24068 / PA7</strain>
    </source>
</reference>
<dbReference type="EMBL" id="CP000744">
    <property type="protein sequence ID" value="ABR85392.1"/>
    <property type="molecule type" value="Genomic_DNA"/>
</dbReference>
<dbReference type="RefSeq" id="WP_003093747.1">
    <property type="nucleotide sequence ID" value="NC_009656.1"/>
</dbReference>
<dbReference type="SMR" id="A6UZI0"/>
<dbReference type="GeneID" id="77219190"/>
<dbReference type="KEGG" id="pap:PSPA7_0829"/>
<dbReference type="HOGENOM" id="CLU_086499_3_2_6"/>
<dbReference type="Proteomes" id="UP000001582">
    <property type="component" value="Chromosome"/>
</dbReference>
<dbReference type="GO" id="GO:0022625">
    <property type="term" value="C:cytosolic large ribosomal subunit"/>
    <property type="evidence" value="ECO:0007669"/>
    <property type="project" value="TreeGrafter"/>
</dbReference>
<dbReference type="GO" id="GO:0003729">
    <property type="term" value="F:mRNA binding"/>
    <property type="evidence" value="ECO:0007669"/>
    <property type="project" value="TreeGrafter"/>
</dbReference>
<dbReference type="GO" id="GO:0003735">
    <property type="term" value="F:structural constituent of ribosome"/>
    <property type="evidence" value="ECO:0007669"/>
    <property type="project" value="InterPro"/>
</dbReference>
<dbReference type="GO" id="GO:0006412">
    <property type="term" value="P:translation"/>
    <property type="evidence" value="ECO:0007669"/>
    <property type="project" value="UniProtKB-UniRule"/>
</dbReference>
<dbReference type="CDD" id="cd00387">
    <property type="entry name" value="Ribosomal_L7_L12"/>
    <property type="match status" value="1"/>
</dbReference>
<dbReference type="FunFam" id="1.20.5.710:FF:000003">
    <property type="entry name" value="50S ribosomal protein L7/L12"/>
    <property type="match status" value="1"/>
</dbReference>
<dbReference type="FunFam" id="3.30.1390.10:FF:000001">
    <property type="entry name" value="50S ribosomal protein L7/L12"/>
    <property type="match status" value="1"/>
</dbReference>
<dbReference type="Gene3D" id="3.30.1390.10">
    <property type="match status" value="1"/>
</dbReference>
<dbReference type="Gene3D" id="1.20.5.710">
    <property type="entry name" value="Single helix bin"/>
    <property type="match status" value="1"/>
</dbReference>
<dbReference type="HAMAP" id="MF_00368">
    <property type="entry name" value="Ribosomal_bL12"/>
    <property type="match status" value="1"/>
</dbReference>
<dbReference type="InterPro" id="IPR000206">
    <property type="entry name" value="Ribosomal_bL12"/>
</dbReference>
<dbReference type="InterPro" id="IPR013823">
    <property type="entry name" value="Ribosomal_bL12_C"/>
</dbReference>
<dbReference type="InterPro" id="IPR014719">
    <property type="entry name" value="Ribosomal_bL12_C/ClpS-like"/>
</dbReference>
<dbReference type="InterPro" id="IPR008932">
    <property type="entry name" value="Ribosomal_bL12_oligo"/>
</dbReference>
<dbReference type="InterPro" id="IPR036235">
    <property type="entry name" value="Ribosomal_bL12_oligo_N_sf"/>
</dbReference>
<dbReference type="NCBIfam" id="TIGR00855">
    <property type="entry name" value="L12"/>
    <property type="match status" value="1"/>
</dbReference>
<dbReference type="PANTHER" id="PTHR45987">
    <property type="entry name" value="39S RIBOSOMAL PROTEIN L12"/>
    <property type="match status" value="1"/>
</dbReference>
<dbReference type="PANTHER" id="PTHR45987:SF4">
    <property type="entry name" value="LARGE RIBOSOMAL SUBUNIT PROTEIN BL12M"/>
    <property type="match status" value="1"/>
</dbReference>
<dbReference type="Pfam" id="PF00542">
    <property type="entry name" value="Ribosomal_L12"/>
    <property type="match status" value="1"/>
</dbReference>
<dbReference type="Pfam" id="PF16320">
    <property type="entry name" value="Ribosomal_L12_N"/>
    <property type="match status" value="1"/>
</dbReference>
<dbReference type="SUPFAM" id="SSF54736">
    <property type="entry name" value="ClpS-like"/>
    <property type="match status" value="1"/>
</dbReference>
<dbReference type="SUPFAM" id="SSF48300">
    <property type="entry name" value="Ribosomal protein L7/12, oligomerisation (N-terminal) domain"/>
    <property type="match status" value="1"/>
</dbReference>
<organism>
    <name type="scientific">Pseudomonas paraeruginosa (strain DSM 24068 / PA7)</name>
    <name type="common">Pseudomonas aeruginosa (strain PA7)</name>
    <dbReference type="NCBI Taxonomy" id="381754"/>
    <lineage>
        <taxon>Bacteria</taxon>
        <taxon>Pseudomonadati</taxon>
        <taxon>Pseudomonadota</taxon>
        <taxon>Gammaproteobacteria</taxon>
        <taxon>Pseudomonadales</taxon>
        <taxon>Pseudomonadaceae</taxon>
        <taxon>Pseudomonas</taxon>
        <taxon>Pseudomonas paraeruginosa</taxon>
    </lineage>
</organism>
<feature type="chain" id="PRO_1000007061" description="Large ribosomal subunit protein bL12">
    <location>
        <begin position="1"/>
        <end position="122"/>
    </location>
</feature>
<accession>A6UZI0</accession>